<comment type="function">
    <text evidence="1">Required for spatial organization of the terminus region of the chromosome (Ter macrodomain) during the cell cycle. Prevents early segregation of duplicated Ter macrodomains during cell division. Binds specifically to matS, which is a 13 bp signature motif repeated within the Ter macrodomain.</text>
</comment>
<comment type="subunit">
    <text evidence="1">Homodimer.</text>
</comment>
<comment type="subcellular location">
    <subcellularLocation>
        <location evidence="1">Cytoplasm</location>
    </subcellularLocation>
</comment>
<comment type="similarity">
    <text evidence="1">Belongs to the MatP family.</text>
</comment>
<sequence>MKYQQLENLESGWKWKYLVKKHREGELITRYIEASAAQEAVDVLLSLENEPVLVNGWIDKHMNPELVNRMKQTIRARRKRHFNAEHQHTRKKSIDLEFIVWQRLAGLAQRRGKTLSETIVQLIEDAENKEKYANKMSSLKQDLQALLGKE</sequence>
<gene>
    <name evidence="1" type="primary">matP</name>
    <name type="ordered locus">EcHS_A1065</name>
</gene>
<name>MATP_ECOHS</name>
<protein>
    <recommendedName>
        <fullName evidence="1">Macrodomain Ter protein</fullName>
    </recommendedName>
</protein>
<organism>
    <name type="scientific">Escherichia coli O9:H4 (strain HS)</name>
    <dbReference type="NCBI Taxonomy" id="331112"/>
    <lineage>
        <taxon>Bacteria</taxon>
        <taxon>Pseudomonadati</taxon>
        <taxon>Pseudomonadota</taxon>
        <taxon>Gammaproteobacteria</taxon>
        <taxon>Enterobacterales</taxon>
        <taxon>Enterobacteriaceae</taxon>
        <taxon>Escherichia</taxon>
    </lineage>
</organism>
<proteinExistence type="inferred from homology"/>
<feature type="chain" id="PRO_1000064624" description="Macrodomain Ter protein">
    <location>
        <begin position="1"/>
        <end position="150"/>
    </location>
</feature>
<accession>A7ZYQ8</accession>
<dbReference type="EMBL" id="CP000802">
    <property type="protein sequence ID" value="ABV05412.1"/>
    <property type="molecule type" value="Genomic_DNA"/>
</dbReference>
<dbReference type="RefSeq" id="WP_000877161.1">
    <property type="nucleotide sequence ID" value="NC_009800.1"/>
</dbReference>
<dbReference type="SMR" id="A7ZYQ8"/>
<dbReference type="GeneID" id="93776458"/>
<dbReference type="KEGG" id="ecx:EcHS_A1065"/>
<dbReference type="HOGENOM" id="CLU_142157_0_0_6"/>
<dbReference type="GO" id="GO:0005737">
    <property type="term" value="C:cytoplasm"/>
    <property type="evidence" value="ECO:0007669"/>
    <property type="project" value="UniProtKB-SubCell"/>
</dbReference>
<dbReference type="GO" id="GO:0043565">
    <property type="term" value="F:sequence-specific DNA binding"/>
    <property type="evidence" value="ECO:0007669"/>
    <property type="project" value="UniProtKB-UniRule"/>
</dbReference>
<dbReference type="GO" id="GO:0051301">
    <property type="term" value="P:cell division"/>
    <property type="evidence" value="ECO:0007669"/>
    <property type="project" value="UniProtKB-UniRule"/>
</dbReference>
<dbReference type="GO" id="GO:0006355">
    <property type="term" value="P:regulation of DNA-templated transcription"/>
    <property type="evidence" value="ECO:0007669"/>
    <property type="project" value="InterPro"/>
</dbReference>
<dbReference type="FunFam" id="1.10.1220.10:FF:000004">
    <property type="entry name" value="Macrodomain Ter protein"/>
    <property type="match status" value="1"/>
</dbReference>
<dbReference type="FunFam" id="1.20.1270.380:FF:000001">
    <property type="entry name" value="Macrodomain Ter protein"/>
    <property type="match status" value="1"/>
</dbReference>
<dbReference type="Gene3D" id="1.20.1270.380">
    <property type="entry name" value="MatP, N-terminal domain"/>
    <property type="match status" value="1"/>
</dbReference>
<dbReference type="Gene3D" id="1.10.1220.10">
    <property type="entry name" value="Met repressor-like"/>
    <property type="match status" value="1"/>
</dbReference>
<dbReference type="HAMAP" id="MF_01073">
    <property type="entry name" value="MatP"/>
    <property type="match status" value="1"/>
</dbReference>
<dbReference type="InterPro" id="IPR013321">
    <property type="entry name" value="Arc_rbn_hlx_hlx"/>
</dbReference>
<dbReference type="InterPro" id="IPR009390">
    <property type="entry name" value="MatP"/>
</dbReference>
<dbReference type="InterPro" id="IPR035375">
    <property type="entry name" value="MatP_C"/>
</dbReference>
<dbReference type="InterPro" id="IPR035087">
    <property type="entry name" value="MatP_N"/>
</dbReference>
<dbReference type="InterPro" id="IPR038339">
    <property type="entry name" value="MatP_N_sf"/>
</dbReference>
<dbReference type="NCBIfam" id="NF003471">
    <property type="entry name" value="PRK05097.1"/>
    <property type="match status" value="1"/>
</dbReference>
<dbReference type="Pfam" id="PF06303">
    <property type="entry name" value="MatP"/>
    <property type="match status" value="1"/>
</dbReference>
<dbReference type="Pfam" id="PF17414">
    <property type="entry name" value="MatP_C"/>
    <property type="match status" value="1"/>
</dbReference>
<keyword id="KW-0131">Cell cycle</keyword>
<keyword id="KW-0132">Cell division</keyword>
<keyword id="KW-0963">Cytoplasm</keyword>
<keyword id="KW-0238">DNA-binding</keyword>
<reference key="1">
    <citation type="journal article" date="2008" name="J. Bacteriol.">
        <title>The pangenome structure of Escherichia coli: comparative genomic analysis of E. coli commensal and pathogenic isolates.</title>
        <authorList>
            <person name="Rasko D.A."/>
            <person name="Rosovitz M.J."/>
            <person name="Myers G.S.A."/>
            <person name="Mongodin E.F."/>
            <person name="Fricke W.F."/>
            <person name="Gajer P."/>
            <person name="Crabtree J."/>
            <person name="Sebaihia M."/>
            <person name="Thomson N.R."/>
            <person name="Chaudhuri R."/>
            <person name="Henderson I.R."/>
            <person name="Sperandio V."/>
            <person name="Ravel J."/>
        </authorList>
    </citation>
    <scope>NUCLEOTIDE SEQUENCE [LARGE SCALE GENOMIC DNA]</scope>
    <source>
        <strain>HS</strain>
    </source>
</reference>
<evidence type="ECO:0000255" key="1">
    <source>
        <dbReference type="HAMAP-Rule" id="MF_01073"/>
    </source>
</evidence>